<sequence>MANDQEMSGWTDLLHSSTKLLEQAAPSSQFPPLQRNLDQLEALSRKLKAKTLRNEAPSQSIAATRLLAREGINADQLSRDLKSFELKTTFEDVFPAETTSVEEYLQQVHEMAMVSAIQEAQKDNVRSFNNYMLKVLEEDCIKEKRDFLHSLSKTSMLPKTKMINSSRGSHAGSLVPLSPQVSSKPGTELVSMTNKPIHEKKAYVYAEVVKKLNSARERGLPFKLATLFNGAYESLEIDLTRGKSVNMQKLWQLIQGMTGEESAVQHGVSKRMALVIGARRHLECGHGKHIMDTIQSHPTQAALGGSVGNLQRIRAFLRIRLRDYGSLDFDSVDARRQPPVDTTWQQIYFCLRTGYYEEAREIAQSSRSSQQQFAPLLTEWITTGGTVAAQTAATASEECEKLLRMGDRFGQTTYDKKKLLLYTIISGSRRQIDRIMRDFSTLFNTIEDFLWFKLSCVRDVAGGSSSMIVNDGLVPYSLDDLQAYLNKFEPSYYTKNGKDPLVYPYVLLLSIQLLPAIMHMSNEAGDEGYNIDAVHVAISLVDHSILSEGSGTGRKLSVMDANAEASSMIRQYGSMYLHHGDLQMTLEYYAQAAIAVGGGQQAWSGRSNVDQQRQRNLMLKQLLTEILSQEDGIHFLLGARGSGEEGELGRFLPDIKLRQQFLIEAAHQFQEAGLYDKSIELQKRVGAFSSALETINKCLSEAICSLVRGRPDGESRTEGLVLSGNDILNSYKYHPDVSAQERHLVMEQETILRELEAILSIHKLARLNKHLDAIREVAKLPFLHLDPRQPDTTSDEFQKASSYFQTCVPDLLKVALTCLDNVADTDGSIRGMRSKIAGFLASNTQRNWPRDLYEKIARSF</sequence>
<gene>
    <name evidence="2" type="primary">NUP93B</name>
    <name evidence="5" type="ordered locus">At3g57350</name>
    <name evidence="6" type="ORF">F28O9.200</name>
</gene>
<comment type="subunit">
    <text evidence="4">Part of the nuclear pore complex (NPC). The NPC has an eight-fold symmetrical structure comprising a central transport channel and two rings, the cytoplasmic and nuclear rings, to which eight filaments are attached. The cytoplasmic filaments have loose ends, while the nuclear filaments are joined in a distal ring, forming a nuclear basket. NPCs are highly dynamic in configuration and composition, and can be devided in 3 subcomplexes, the NUP62 subcomplex, the NUP107-160 subcomplex and the NUP93 subcomplex, containing approximately 30 different nucleoporin proteins.</text>
</comment>
<comment type="subcellular location">
    <subcellularLocation>
        <location evidence="1">Nucleus envelope</location>
    </subcellularLocation>
    <subcellularLocation>
        <location evidence="3">Nucleus</location>
        <location evidence="3">Nuclear pore complex</location>
    </subcellularLocation>
</comment>
<comment type="similarity">
    <text evidence="3">Belongs to the nucleoporin interacting component (NIC) family.</text>
</comment>
<comment type="sequence caution" evidence="3">
    <conflict type="erroneous gene model prediction">
        <sequence resource="EMBL-CDS" id="CAB68141"/>
    </conflict>
</comment>
<accession>F4J284</accession>
<accession>Q9M2L2</accession>
<dbReference type="EMBL" id="AL137080">
    <property type="protein sequence ID" value="CAB68141.1"/>
    <property type="status" value="ALT_SEQ"/>
    <property type="molecule type" value="Genomic_DNA"/>
</dbReference>
<dbReference type="EMBL" id="CP002686">
    <property type="protein sequence ID" value="AEE79645.1"/>
    <property type="molecule type" value="Genomic_DNA"/>
</dbReference>
<dbReference type="PIR" id="T45813">
    <property type="entry name" value="T45813"/>
</dbReference>
<dbReference type="RefSeq" id="NP_191294.5">
    <property type="nucleotide sequence ID" value="NM_115595.7"/>
</dbReference>
<dbReference type="SMR" id="F4J284"/>
<dbReference type="BioGRID" id="10218">
    <property type="interactions" value="3"/>
</dbReference>
<dbReference type="FunCoup" id="F4J284">
    <property type="interactions" value="4789"/>
</dbReference>
<dbReference type="STRING" id="3702.F4J284"/>
<dbReference type="iPTMnet" id="F4J284"/>
<dbReference type="PaxDb" id="3702-AT3G57350.1"/>
<dbReference type="ProteomicsDB" id="249430"/>
<dbReference type="EnsemblPlants" id="AT3G57350.1">
    <property type="protein sequence ID" value="AT3G57350.1"/>
    <property type="gene ID" value="AT3G57350"/>
</dbReference>
<dbReference type="GeneID" id="824902"/>
<dbReference type="Gramene" id="AT3G57350.1">
    <property type="protein sequence ID" value="AT3G57350.1"/>
    <property type="gene ID" value="AT3G57350"/>
</dbReference>
<dbReference type="KEGG" id="ath:AT3G57350"/>
<dbReference type="Araport" id="AT3G57350"/>
<dbReference type="TAIR" id="AT3G57350"/>
<dbReference type="eggNOG" id="KOG2168">
    <property type="taxonomic scope" value="Eukaryota"/>
</dbReference>
<dbReference type="HOGENOM" id="CLU_017473_0_0_1"/>
<dbReference type="InParanoid" id="F4J284"/>
<dbReference type="OMA" id="RPHAVHM"/>
<dbReference type="PRO" id="PR:F4J284"/>
<dbReference type="Proteomes" id="UP000006548">
    <property type="component" value="Chromosome 3"/>
</dbReference>
<dbReference type="ExpressionAtlas" id="F4J284">
    <property type="expression patterns" value="baseline and differential"/>
</dbReference>
<dbReference type="GO" id="GO:0005635">
    <property type="term" value="C:nuclear envelope"/>
    <property type="evidence" value="ECO:0000314"/>
    <property type="project" value="TAIR"/>
</dbReference>
<dbReference type="GO" id="GO:0005643">
    <property type="term" value="C:nuclear pore"/>
    <property type="evidence" value="ECO:0007669"/>
    <property type="project" value="UniProtKB-SubCell"/>
</dbReference>
<dbReference type="GO" id="GO:0017056">
    <property type="term" value="F:structural constituent of nuclear pore"/>
    <property type="evidence" value="ECO:0007669"/>
    <property type="project" value="InterPro"/>
</dbReference>
<dbReference type="GO" id="GO:0051028">
    <property type="term" value="P:mRNA transport"/>
    <property type="evidence" value="ECO:0007669"/>
    <property type="project" value="UniProtKB-KW"/>
</dbReference>
<dbReference type="GO" id="GO:0015031">
    <property type="term" value="P:protein transport"/>
    <property type="evidence" value="ECO:0007669"/>
    <property type="project" value="UniProtKB-KW"/>
</dbReference>
<dbReference type="InterPro" id="IPR007231">
    <property type="entry name" value="Nucleoporin_int_Nup93/Nic96"/>
</dbReference>
<dbReference type="PANTHER" id="PTHR11225:SF4">
    <property type="entry name" value="NUCLEAR PORE COMPLEX PROTEIN NUP93"/>
    <property type="match status" value="1"/>
</dbReference>
<dbReference type="PANTHER" id="PTHR11225">
    <property type="entry name" value="NUCLEAR PORE COMPLEX PROTEIN NUP93 NUCLEOPORIN NUP93 DEAD EYE PROTEIN"/>
    <property type="match status" value="1"/>
</dbReference>
<dbReference type="Pfam" id="PF04097">
    <property type="entry name" value="Nic96"/>
    <property type="match status" value="1"/>
</dbReference>
<reference key="1">
    <citation type="journal article" date="2000" name="Nature">
        <title>Sequence and analysis of chromosome 3 of the plant Arabidopsis thaliana.</title>
        <authorList>
            <person name="Salanoubat M."/>
            <person name="Lemcke K."/>
            <person name="Rieger M."/>
            <person name="Ansorge W."/>
            <person name="Unseld M."/>
            <person name="Fartmann B."/>
            <person name="Valle G."/>
            <person name="Bloecker H."/>
            <person name="Perez-Alonso M."/>
            <person name="Obermaier B."/>
            <person name="Delseny M."/>
            <person name="Boutry M."/>
            <person name="Grivell L.A."/>
            <person name="Mache R."/>
            <person name="Puigdomenech P."/>
            <person name="De Simone V."/>
            <person name="Choisne N."/>
            <person name="Artiguenave F."/>
            <person name="Robert C."/>
            <person name="Brottier P."/>
            <person name="Wincker P."/>
            <person name="Cattolico L."/>
            <person name="Weissenbach J."/>
            <person name="Saurin W."/>
            <person name="Quetier F."/>
            <person name="Schaefer M."/>
            <person name="Mueller-Auer S."/>
            <person name="Gabel C."/>
            <person name="Fuchs M."/>
            <person name="Benes V."/>
            <person name="Wurmbach E."/>
            <person name="Drzonek H."/>
            <person name="Erfle H."/>
            <person name="Jordan N."/>
            <person name="Bangert S."/>
            <person name="Wiedelmann R."/>
            <person name="Kranz H."/>
            <person name="Voss H."/>
            <person name="Holland R."/>
            <person name="Brandt P."/>
            <person name="Nyakatura G."/>
            <person name="Vezzi A."/>
            <person name="D'Angelo M."/>
            <person name="Pallavicini A."/>
            <person name="Toppo S."/>
            <person name="Simionati B."/>
            <person name="Conrad A."/>
            <person name="Hornischer K."/>
            <person name="Kauer G."/>
            <person name="Loehnert T.-H."/>
            <person name="Nordsiek G."/>
            <person name="Reichelt J."/>
            <person name="Scharfe M."/>
            <person name="Schoen O."/>
            <person name="Bargues M."/>
            <person name="Terol J."/>
            <person name="Climent J."/>
            <person name="Navarro P."/>
            <person name="Collado C."/>
            <person name="Perez-Perez A."/>
            <person name="Ottenwaelder B."/>
            <person name="Duchemin D."/>
            <person name="Cooke R."/>
            <person name="Laudie M."/>
            <person name="Berger-Llauro C."/>
            <person name="Purnelle B."/>
            <person name="Masuy D."/>
            <person name="de Haan M."/>
            <person name="Maarse A.C."/>
            <person name="Alcaraz J.-P."/>
            <person name="Cottet A."/>
            <person name="Casacuberta E."/>
            <person name="Monfort A."/>
            <person name="Argiriou A."/>
            <person name="Flores M."/>
            <person name="Liguori R."/>
            <person name="Vitale D."/>
            <person name="Mannhaupt G."/>
            <person name="Haase D."/>
            <person name="Schoof H."/>
            <person name="Rudd S."/>
            <person name="Zaccaria P."/>
            <person name="Mewes H.-W."/>
            <person name="Mayer K.F.X."/>
            <person name="Kaul S."/>
            <person name="Town C.D."/>
            <person name="Koo H.L."/>
            <person name="Tallon L.J."/>
            <person name="Jenkins J."/>
            <person name="Rooney T."/>
            <person name="Rizzo M."/>
            <person name="Walts A."/>
            <person name="Utterback T."/>
            <person name="Fujii C.Y."/>
            <person name="Shea T.P."/>
            <person name="Creasy T.H."/>
            <person name="Haas B."/>
            <person name="Maiti R."/>
            <person name="Wu D."/>
            <person name="Peterson J."/>
            <person name="Van Aken S."/>
            <person name="Pai G."/>
            <person name="Militscher J."/>
            <person name="Sellers P."/>
            <person name="Gill J.E."/>
            <person name="Feldblyum T.V."/>
            <person name="Preuss D."/>
            <person name="Lin X."/>
            <person name="Nierman W.C."/>
            <person name="Salzberg S.L."/>
            <person name="White O."/>
            <person name="Venter J.C."/>
            <person name="Fraser C.M."/>
            <person name="Kaneko T."/>
            <person name="Nakamura Y."/>
            <person name="Sato S."/>
            <person name="Kato T."/>
            <person name="Asamizu E."/>
            <person name="Sasamoto S."/>
            <person name="Kimura T."/>
            <person name="Idesawa K."/>
            <person name="Kawashima K."/>
            <person name="Kishida Y."/>
            <person name="Kiyokawa C."/>
            <person name="Kohara M."/>
            <person name="Matsumoto M."/>
            <person name="Matsuno A."/>
            <person name="Muraki A."/>
            <person name="Nakayama S."/>
            <person name="Nakazaki N."/>
            <person name="Shinpo S."/>
            <person name="Takeuchi C."/>
            <person name="Wada T."/>
            <person name="Watanabe A."/>
            <person name="Yamada M."/>
            <person name="Yasuda M."/>
            <person name="Tabata S."/>
        </authorList>
    </citation>
    <scope>NUCLEOTIDE SEQUENCE [LARGE SCALE GENOMIC DNA]</scope>
    <source>
        <strain>cv. Columbia</strain>
    </source>
</reference>
<reference key="2">
    <citation type="journal article" date="2017" name="Plant J.">
        <title>Araport11: a complete reannotation of the Arabidopsis thaliana reference genome.</title>
        <authorList>
            <person name="Cheng C.Y."/>
            <person name="Krishnakumar V."/>
            <person name="Chan A.P."/>
            <person name="Thibaud-Nissen F."/>
            <person name="Schobel S."/>
            <person name="Town C.D."/>
        </authorList>
    </citation>
    <scope>GENOME REANNOTATION</scope>
    <source>
        <strain>cv. Columbia</strain>
    </source>
</reference>
<reference key="3">
    <citation type="journal article" date="2010" name="Plant Cell">
        <title>Identification and characterization of nuclear pore complex components in Arabidopsis thaliana.</title>
        <authorList>
            <person name="Tamura K."/>
            <person name="Fukao Y."/>
            <person name="Iwamoto M."/>
            <person name="Haraguchi T."/>
            <person name="Hara-Nishimura I."/>
        </authorList>
    </citation>
    <scope>IDENTIFICATION IN THE NUCLEAR PORE COMPLEX BY MASS SPECTROMETRY</scope>
    <scope>SUBCELLULAR LOCATION</scope>
    <scope>NOMENCLATURE</scope>
</reference>
<feature type="chain" id="PRO_0000431095" description="Nuclear pore complex protein NUP93B">
    <location>
        <begin position="1"/>
        <end position="860"/>
    </location>
</feature>
<feature type="sequence conflict" description="In Ref. 1; CAB68141." ref="1">
    <original>Q</original>
    <variation>K</variation>
    <location>
        <position position="295"/>
    </location>
</feature>
<keyword id="KW-0509">mRNA transport</keyword>
<keyword id="KW-0906">Nuclear pore complex</keyword>
<keyword id="KW-0539">Nucleus</keyword>
<keyword id="KW-0653">Protein transport</keyword>
<keyword id="KW-1185">Reference proteome</keyword>
<keyword id="KW-0811">Translocation</keyword>
<keyword id="KW-0813">Transport</keyword>
<organism evidence="7">
    <name type="scientific">Arabidopsis thaliana</name>
    <name type="common">Mouse-ear cress</name>
    <dbReference type="NCBI Taxonomy" id="3702"/>
    <lineage>
        <taxon>Eukaryota</taxon>
        <taxon>Viridiplantae</taxon>
        <taxon>Streptophyta</taxon>
        <taxon>Embryophyta</taxon>
        <taxon>Tracheophyta</taxon>
        <taxon>Spermatophyta</taxon>
        <taxon>Magnoliopsida</taxon>
        <taxon>eudicotyledons</taxon>
        <taxon>Gunneridae</taxon>
        <taxon>Pentapetalae</taxon>
        <taxon>rosids</taxon>
        <taxon>malvids</taxon>
        <taxon>Brassicales</taxon>
        <taxon>Brassicaceae</taxon>
        <taxon>Camelineae</taxon>
        <taxon>Arabidopsis</taxon>
    </lineage>
</organism>
<protein>
    <recommendedName>
        <fullName evidence="2">Nuclear pore complex protein NUP93B</fullName>
    </recommendedName>
    <alternativeName>
        <fullName>Nucleoporin 93B</fullName>
    </alternativeName>
</protein>
<name>NU93B_ARATH</name>
<evidence type="ECO:0000269" key="1">
    <source>
    </source>
</evidence>
<evidence type="ECO:0000303" key="2">
    <source>
    </source>
</evidence>
<evidence type="ECO:0000305" key="3"/>
<evidence type="ECO:0000305" key="4">
    <source>
    </source>
</evidence>
<evidence type="ECO:0000312" key="5">
    <source>
        <dbReference type="Araport" id="AT3G57350"/>
    </source>
</evidence>
<evidence type="ECO:0000312" key="6">
    <source>
        <dbReference type="EMBL" id="CAB68141.1"/>
    </source>
</evidence>
<evidence type="ECO:0000312" key="7">
    <source>
        <dbReference type="Proteomes" id="UP000006548"/>
    </source>
</evidence>
<proteinExistence type="evidence at protein level"/>